<dbReference type="EMBL" id="M63421">
    <property type="protein sequence ID" value="AAA28432.1"/>
    <property type="molecule type" value="mRNA"/>
</dbReference>
<dbReference type="EMBL" id="M63008">
    <property type="protein sequence ID" value="AAA28431.1"/>
    <property type="molecule type" value="mRNA"/>
</dbReference>
<dbReference type="EMBL" id="AF057167">
    <property type="protein sequence ID" value="AAD09428.1"/>
    <property type="molecule type" value="Genomic_DNA"/>
</dbReference>
<dbReference type="EMBL" id="AF057167">
    <property type="protein sequence ID" value="AAD09430.1"/>
    <property type="molecule type" value="Genomic_DNA"/>
</dbReference>
<dbReference type="EMBL" id="AF057167">
    <property type="protein sequence ID" value="AAD09431.1"/>
    <property type="molecule type" value="Genomic_DNA"/>
</dbReference>
<dbReference type="EMBL" id="AE014296">
    <property type="protein sequence ID" value="AAF51816.1"/>
    <property type="molecule type" value="Genomic_DNA"/>
</dbReference>
<dbReference type="EMBL" id="AE014296">
    <property type="protein sequence ID" value="AAF51817.1"/>
    <property type="molecule type" value="Genomic_DNA"/>
</dbReference>
<dbReference type="EMBL" id="AE014296">
    <property type="protein sequence ID" value="AAN12195.2"/>
    <property type="molecule type" value="Genomic_DNA"/>
</dbReference>
<dbReference type="EMBL" id="AY059457">
    <property type="protein sequence ID" value="AAL13363.1"/>
    <property type="status" value="ALT_SEQ"/>
    <property type="molecule type" value="mRNA"/>
</dbReference>
<dbReference type="RefSeq" id="NP_001287144.1">
    <property type="nucleotide sequence ID" value="NM_001300215.1"/>
</dbReference>
<dbReference type="RefSeq" id="NP_524213.1">
    <property type="nucleotide sequence ID" value="NM_079489.3"/>
</dbReference>
<dbReference type="RefSeq" id="NP_730713.1">
    <property type="nucleotide sequence ID" value="NM_168949.2"/>
</dbReference>
<dbReference type="RefSeq" id="NP_730714.2">
    <property type="nucleotide sequence ID" value="NM_168950.4"/>
</dbReference>
<dbReference type="SMR" id="Q03751"/>
<dbReference type="BioGRID" id="65696">
    <property type="interactions" value="9"/>
</dbReference>
<dbReference type="FunCoup" id="Q03751">
    <property type="interactions" value="159"/>
</dbReference>
<dbReference type="IntAct" id="Q03751">
    <property type="interactions" value="2"/>
</dbReference>
<dbReference type="STRING" id="7227.FBpp0311238"/>
<dbReference type="iPTMnet" id="Q03751"/>
<dbReference type="SwissPalm" id="Q03751"/>
<dbReference type="PaxDb" id="7227-FBpp0078146"/>
<dbReference type="DNASU" id="40459"/>
<dbReference type="GeneID" id="40459"/>
<dbReference type="KEGG" id="dme:Dmel_CG6395"/>
<dbReference type="AGR" id="FB:FBgn0004179"/>
<dbReference type="CTD" id="40459"/>
<dbReference type="FlyBase" id="FBgn0004179">
    <property type="gene designation" value="Csp"/>
</dbReference>
<dbReference type="VEuPathDB" id="VectorBase:FBgn0004179"/>
<dbReference type="eggNOG" id="KOG0716">
    <property type="taxonomic scope" value="Eukaryota"/>
</dbReference>
<dbReference type="InParanoid" id="Q03751"/>
<dbReference type="OrthoDB" id="445556at2759"/>
<dbReference type="Reactome" id="R-DME-6798695">
    <property type="pathway name" value="Neutrophil degranulation"/>
</dbReference>
<dbReference type="Reactome" id="R-DME-888590">
    <property type="pathway name" value="GABA synthesis, release, reuptake and degradation"/>
</dbReference>
<dbReference type="BioGRID-ORCS" id="40459">
    <property type="hits" value="0 hits in 3 CRISPR screens"/>
</dbReference>
<dbReference type="ChiTaRS" id="Csp">
    <property type="organism name" value="fly"/>
</dbReference>
<dbReference type="GenomeRNAi" id="40459"/>
<dbReference type="PRO" id="PR:Q03751"/>
<dbReference type="Proteomes" id="UP000000803">
    <property type="component" value="Chromosome 3L"/>
</dbReference>
<dbReference type="ExpressionAtlas" id="Q03751">
    <property type="expression patterns" value="baseline and differential"/>
</dbReference>
<dbReference type="GO" id="GO:0005886">
    <property type="term" value="C:plasma membrane"/>
    <property type="evidence" value="ECO:0000250"/>
    <property type="project" value="FlyBase"/>
</dbReference>
<dbReference type="GO" id="GO:0008021">
    <property type="term" value="C:synaptic vesicle"/>
    <property type="evidence" value="ECO:0000314"/>
    <property type="project" value="FlyBase"/>
</dbReference>
<dbReference type="GO" id="GO:0043195">
    <property type="term" value="C:terminal bouton"/>
    <property type="evidence" value="ECO:0000314"/>
    <property type="project" value="FlyBase"/>
</dbReference>
<dbReference type="GO" id="GO:0061176">
    <property type="term" value="C:type Ib terminal bouton"/>
    <property type="evidence" value="ECO:0000314"/>
    <property type="project" value="FlyBase"/>
</dbReference>
<dbReference type="GO" id="GO:0061177">
    <property type="term" value="C:type Is terminal bouton"/>
    <property type="evidence" value="ECO:0000314"/>
    <property type="project" value="FlyBase"/>
</dbReference>
<dbReference type="GO" id="GO:0006887">
    <property type="term" value="P:exocytosis"/>
    <property type="evidence" value="ECO:0000315"/>
    <property type="project" value="FlyBase"/>
</dbReference>
<dbReference type="GO" id="GO:0070050">
    <property type="term" value="P:neuron cellular homeostasis"/>
    <property type="evidence" value="ECO:0000316"/>
    <property type="project" value="FlyBase"/>
</dbReference>
<dbReference type="GO" id="GO:0006457">
    <property type="term" value="P:protein folding"/>
    <property type="evidence" value="ECO:0000303"/>
    <property type="project" value="FlyBase"/>
</dbReference>
<dbReference type="GO" id="GO:1900073">
    <property type="term" value="P:regulation of neuromuscular synaptic transmission"/>
    <property type="evidence" value="ECO:0000316"/>
    <property type="project" value="FlyBase"/>
</dbReference>
<dbReference type="GO" id="GO:0016079">
    <property type="term" value="P:synaptic vesicle exocytosis"/>
    <property type="evidence" value="ECO:0000250"/>
    <property type="project" value="FlyBase"/>
</dbReference>
<dbReference type="CDD" id="cd06257">
    <property type="entry name" value="DnaJ"/>
    <property type="match status" value="1"/>
</dbReference>
<dbReference type="FunFam" id="1.10.287.110:FF:000017">
    <property type="entry name" value="dnaJ homolog subfamily C member 5"/>
    <property type="match status" value="1"/>
</dbReference>
<dbReference type="Gene3D" id="1.10.287.110">
    <property type="entry name" value="DnaJ domain"/>
    <property type="match status" value="1"/>
</dbReference>
<dbReference type="InterPro" id="IPR051434">
    <property type="entry name" value="DnaJ_C_subfamily_member5"/>
</dbReference>
<dbReference type="InterPro" id="IPR001623">
    <property type="entry name" value="DnaJ_domain"/>
</dbReference>
<dbReference type="InterPro" id="IPR018253">
    <property type="entry name" value="DnaJ_domain_CS"/>
</dbReference>
<dbReference type="InterPro" id="IPR036869">
    <property type="entry name" value="J_dom_sf"/>
</dbReference>
<dbReference type="PANTHER" id="PTHR44027">
    <property type="entry name" value="DNAJ HOMOLOG SUBFAMILY C MEMBER 5 HOMOLOG"/>
    <property type="match status" value="1"/>
</dbReference>
<dbReference type="PANTHER" id="PTHR44027:SF7">
    <property type="entry name" value="DNAJ HOMOLOG SUBFAMILY C MEMBER 5 HOMOLOG"/>
    <property type="match status" value="1"/>
</dbReference>
<dbReference type="Pfam" id="PF00226">
    <property type="entry name" value="DnaJ"/>
    <property type="match status" value="1"/>
</dbReference>
<dbReference type="PRINTS" id="PR00625">
    <property type="entry name" value="JDOMAIN"/>
</dbReference>
<dbReference type="SMART" id="SM00271">
    <property type="entry name" value="DnaJ"/>
    <property type="match status" value="1"/>
</dbReference>
<dbReference type="SUPFAM" id="SSF46565">
    <property type="entry name" value="Chaperone J-domain"/>
    <property type="match status" value="1"/>
</dbReference>
<dbReference type="PROSITE" id="PS00636">
    <property type="entry name" value="DNAJ_1"/>
    <property type="match status" value="1"/>
</dbReference>
<dbReference type="PROSITE" id="PS50076">
    <property type="entry name" value="DNAJ_2"/>
    <property type="match status" value="1"/>
</dbReference>
<proteinExistence type="evidence at protein level"/>
<feature type="chain" id="PRO_0000071075" description="DnaJ homolog subfamily C member 5 homolog">
    <location>
        <begin position="1"/>
        <end position="249"/>
    </location>
</feature>
<feature type="domain" description="J" evidence="2">
    <location>
        <begin position="15"/>
        <end position="84"/>
    </location>
</feature>
<feature type="region of interest" description="Disordered" evidence="3">
    <location>
        <begin position="146"/>
        <end position="177"/>
    </location>
</feature>
<feature type="region of interest" description="Disordered" evidence="3">
    <location>
        <begin position="218"/>
        <end position="249"/>
    </location>
</feature>
<feature type="compositionally biased region" description="Basic and acidic residues" evidence="3">
    <location>
        <begin position="146"/>
        <end position="162"/>
    </location>
</feature>
<feature type="compositionally biased region" description="Polar residues" evidence="3">
    <location>
        <begin position="227"/>
        <end position="241"/>
    </location>
</feature>
<feature type="modified residue" description="Phosphoserine" evidence="4">
    <location>
        <position position="12"/>
    </location>
</feature>
<feature type="modified residue" description="Phosphothreonine" evidence="4">
    <location>
        <position position="13"/>
    </location>
</feature>
<feature type="modified residue" description="Phosphoserine" evidence="4">
    <location>
        <position position="14"/>
    </location>
</feature>
<feature type="modified residue" description="Phosphoserine" evidence="4">
    <location>
        <position position="17"/>
    </location>
</feature>
<feature type="modified residue" description="Phosphotyrosine" evidence="4">
    <location>
        <position position="19"/>
    </location>
</feature>
<feature type="splice variant" id="VSP_001293" description="In isoform CSP3 and isoform CSP2." evidence="9 10">
    <location>
        <begin position="154"/>
        <end position="174"/>
    </location>
</feature>
<feature type="splice variant" id="VSP_001294" description="In isoform CSP3." evidence="9 10">
    <original>DMVNQKY</original>
    <variation>GI</variation>
    <location>
        <begin position="243"/>
        <end position="249"/>
    </location>
</feature>
<feature type="sequence conflict" description="In Ref. 1; AAA28432." evidence="11" ref="1">
    <original>N</original>
    <variation>D</variation>
    <location>
        <position position="71"/>
    </location>
</feature>
<gene>
    <name evidence="12" type="primary">Csp</name>
    <name type="ORF">CG6395</name>
</gene>
<name>DNJC5_DROME</name>
<evidence type="ECO:0000250" key="1">
    <source>
        <dbReference type="UniProtKB" id="Q9H3Z4"/>
    </source>
</evidence>
<evidence type="ECO:0000255" key="2">
    <source>
        <dbReference type="PROSITE-ProRule" id="PRU00286"/>
    </source>
</evidence>
<evidence type="ECO:0000256" key="3">
    <source>
        <dbReference type="SAM" id="MobiDB-lite"/>
    </source>
</evidence>
<evidence type="ECO:0000269" key="4">
    <source>
    </source>
</evidence>
<evidence type="ECO:0000269" key="5">
    <source>
    </source>
</evidence>
<evidence type="ECO:0000269" key="6">
    <source>
    </source>
</evidence>
<evidence type="ECO:0000269" key="7">
    <source>
    </source>
</evidence>
<evidence type="ECO:0000269" key="8">
    <source>
    </source>
</evidence>
<evidence type="ECO:0000303" key="9">
    <source>
    </source>
</evidence>
<evidence type="ECO:0000303" key="10">
    <source>
    </source>
</evidence>
<evidence type="ECO:0000305" key="11"/>
<evidence type="ECO:0000312" key="12">
    <source>
        <dbReference type="FlyBase" id="FBgn0004179"/>
    </source>
</evidence>
<sequence>MSAPGMDKRKLSTSGDSLYEILGLPKTATGDDIKKTYRKLALKYHPDKNPDNVDAADKFKEVNRAHSILSNQTKRNIYDNYGSLGLYIAEQFGEENVNAYFVVTSPAVKAVVICCAVITGCCCCCCCCCCCNFCCGKFKPPVNESHDQYSHLNRPDGNREGNDMPTHLGQPPRLEDVDLDDVNLGAGGAPVTSQPREQAGGQPVFAMPPPSGAVGVNPFTGAPVAANENTSLNTTEQTTYTPDMVNQKY</sequence>
<keyword id="KW-0025">Alternative splicing</keyword>
<keyword id="KW-0143">Chaperone</keyword>
<keyword id="KW-0449">Lipoprotein</keyword>
<keyword id="KW-0472">Membrane</keyword>
<keyword id="KW-0564">Palmitate</keyword>
<keyword id="KW-0597">Phosphoprotein</keyword>
<keyword id="KW-1185">Reference proteome</keyword>
<protein>
    <recommendedName>
        <fullName evidence="1">DnaJ homolog subfamily C member 5 homolog</fullName>
    </recommendedName>
    <alternativeName>
        <fullName evidence="10">Cysteine string protein</fullName>
    </alternativeName>
</protein>
<organism>
    <name type="scientific">Drosophila melanogaster</name>
    <name type="common">Fruit fly</name>
    <dbReference type="NCBI Taxonomy" id="7227"/>
    <lineage>
        <taxon>Eukaryota</taxon>
        <taxon>Metazoa</taxon>
        <taxon>Ecdysozoa</taxon>
        <taxon>Arthropoda</taxon>
        <taxon>Hexapoda</taxon>
        <taxon>Insecta</taxon>
        <taxon>Pterygota</taxon>
        <taxon>Neoptera</taxon>
        <taxon>Endopterygota</taxon>
        <taxon>Diptera</taxon>
        <taxon>Brachycera</taxon>
        <taxon>Muscomorpha</taxon>
        <taxon>Ephydroidea</taxon>
        <taxon>Drosophilidae</taxon>
        <taxon>Drosophila</taxon>
        <taxon>Sophophora</taxon>
    </lineage>
</organism>
<accession>Q03751</accession>
<accession>O61664</accession>
<accession>O61665</accession>
<accession>Q95TD7</accession>
<accession>Q9VNV1</accession>
<comment type="function">
    <text evidence="5 6 8">May have an important role in presynaptic function.</text>
</comment>
<comment type="subcellular location">
    <subcellularLocation>
        <location>Membrane</location>
        <topology>Lipid-anchor</topology>
    </subcellularLocation>
</comment>
<comment type="alternative products">
    <event type="alternative splicing"/>
    <isoform>
        <id>Q03751-1</id>
        <name>CSP1</name>
        <name>CSP32</name>
        <name>B</name>
        <sequence type="displayed"/>
    </isoform>
    <isoform>
        <id>Q03751-2</id>
        <name>CSP2</name>
        <name>C</name>
        <sequence type="described" ref="VSP_001293"/>
    </isoform>
    <isoform>
        <id>Q03751-3</id>
        <name>CSP3</name>
        <name>CSP29</name>
        <name>A</name>
        <sequence type="described" ref="VSP_001293 VSP_001294"/>
    </isoform>
</comment>
<comment type="tissue specificity">
    <text evidence="5 6 8">Expressed in wide range of synaptic terminals: embryonic nervous system, larval neuromuscular junctions, adult visual system (neuropil of optic ganglia and terminal of R1-8 photoreceptors) and thoracic neuromuscular junctions. Also expressed in non-neuronal cells: follicle cells, spermatheca, testis and ejaculatory bulb. Low level of expression is found in many neuronal and non-neuronal tissues.</text>
</comment>
<comment type="PTM">
    <text evidence="7">Fatty acylated. Heavily palmitoylated in the cysteine string motif.</text>
</comment>
<reference key="1">
    <citation type="journal article" date="1990" name="J. Neurogenet.">
        <title>A cysteine-string protein is expressed in retina and brain of Drosophila.</title>
        <authorList>
            <person name="Zinsmaier K.E."/>
            <person name="Hofbauer A."/>
            <person name="Heimbeck G."/>
            <person name="Pflugfelder G.O."/>
            <person name="Buchner S."/>
            <person name="Buchner E."/>
        </authorList>
    </citation>
    <scope>NUCLEOTIDE SEQUENCE [MRNA] (ISOFORMS CSP1 AND CSP3)</scope>
    <scope>FUNCTION</scope>
    <scope>TISSUE SPECIFICITY</scope>
</reference>
<reference key="2">
    <citation type="journal article" date="1998" name="Cell Tissue Res.">
        <title>Wide distribution of the cysteine string proteins in Drosophila tissues revealed by targeted mutagenesis.</title>
        <authorList>
            <person name="Eberle K.K."/>
            <person name="Zinsmaier K.E."/>
            <person name="Buchner S."/>
            <person name="Gruhn M."/>
            <person name="Jenni M."/>
            <person name="Arnold C."/>
            <person name="Leibold C."/>
            <person name="Reisch D."/>
            <person name="Walter N."/>
            <person name="Hafen E."/>
            <person name="Hofbauer A."/>
            <person name="Pflugfelder G.O."/>
            <person name="Buchner E."/>
        </authorList>
    </citation>
    <scope>NUCLEOTIDE SEQUENCE (ISOFORMS CSP1; CSP2 AND CSP3)</scope>
    <scope>FUNCTION</scope>
    <scope>TISSUE SPECIFICITY</scope>
    <source>
        <strain>Berlin</strain>
    </source>
</reference>
<reference key="3">
    <citation type="journal article" date="2000" name="Science">
        <title>The genome sequence of Drosophila melanogaster.</title>
        <authorList>
            <person name="Adams M.D."/>
            <person name="Celniker S.E."/>
            <person name="Holt R.A."/>
            <person name="Evans C.A."/>
            <person name="Gocayne J.D."/>
            <person name="Amanatides P.G."/>
            <person name="Scherer S.E."/>
            <person name="Li P.W."/>
            <person name="Hoskins R.A."/>
            <person name="Galle R.F."/>
            <person name="George R.A."/>
            <person name="Lewis S.E."/>
            <person name="Richards S."/>
            <person name="Ashburner M."/>
            <person name="Henderson S.N."/>
            <person name="Sutton G.G."/>
            <person name="Wortman J.R."/>
            <person name="Yandell M.D."/>
            <person name="Zhang Q."/>
            <person name="Chen L.X."/>
            <person name="Brandon R.C."/>
            <person name="Rogers Y.-H.C."/>
            <person name="Blazej R.G."/>
            <person name="Champe M."/>
            <person name="Pfeiffer B.D."/>
            <person name="Wan K.H."/>
            <person name="Doyle C."/>
            <person name="Baxter E.G."/>
            <person name="Helt G."/>
            <person name="Nelson C.R."/>
            <person name="Miklos G.L.G."/>
            <person name="Abril J.F."/>
            <person name="Agbayani A."/>
            <person name="An H.-J."/>
            <person name="Andrews-Pfannkoch C."/>
            <person name="Baldwin D."/>
            <person name="Ballew R.M."/>
            <person name="Basu A."/>
            <person name="Baxendale J."/>
            <person name="Bayraktaroglu L."/>
            <person name="Beasley E.M."/>
            <person name="Beeson K.Y."/>
            <person name="Benos P.V."/>
            <person name="Berman B.P."/>
            <person name="Bhandari D."/>
            <person name="Bolshakov S."/>
            <person name="Borkova D."/>
            <person name="Botchan M.R."/>
            <person name="Bouck J."/>
            <person name="Brokstein P."/>
            <person name="Brottier P."/>
            <person name="Burtis K.C."/>
            <person name="Busam D.A."/>
            <person name="Butler H."/>
            <person name="Cadieu E."/>
            <person name="Center A."/>
            <person name="Chandra I."/>
            <person name="Cherry J.M."/>
            <person name="Cawley S."/>
            <person name="Dahlke C."/>
            <person name="Davenport L.B."/>
            <person name="Davies P."/>
            <person name="de Pablos B."/>
            <person name="Delcher A."/>
            <person name="Deng Z."/>
            <person name="Mays A.D."/>
            <person name="Dew I."/>
            <person name="Dietz S.M."/>
            <person name="Dodson K."/>
            <person name="Doup L.E."/>
            <person name="Downes M."/>
            <person name="Dugan-Rocha S."/>
            <person name="Dunkov B.C."/>
            <person name="Dunn P."/>
            <person name="Durbin K.J."/>
            <person name="Evangelista C.C."/>
            <person name="Ferraz C."/>
            <person name="Ferriera S."/>
            <person name="Fleischmann W."/>
            <person name="Fosler C."/>
            <person name="Gabrielian A.E."/>
            <person name="Garg N.S."/>
            <person name="Gelbart W.M."/>
            <person name="Glasser K."/>
            <person name="Glodek A."/>
            <person name="Gong F."/>
            <person name="Gorrell J.H."/>
            <person name="Gu Z."/>
            <person name="Guan P."/>
            <person name="Harris M."/>
            <person name="Harris N.L."/>
            <person name="Harvey D.A."/>
            <person name="Heiman T.J."/>
            <person name="Hernandez J.R."/>
            <person name="Houck J."/>
            <person name="Hostin D."/>
            <person name="Houston K.A."/>
            <person name="Howland T.J."/>
            <person name="Wei M.-H."/>
            <person name="Ibegwam C."/>
            <person name="Jalali M."/>
            <person name="Kalush F."/>
            <person name="Karpen G.H."/>
            <person name="Ke Z."/>
            <person name="Kennison J.A."/>
            <person name="Ketchum K.A."/>
            <person name="Kimmel B.E."/>
            <person name="Kodira C.D."/>
            <person name="Kraft C.L."/>
            <person name="Kravitz S."/>
            <person name="Kulp D."/>
            <person name="Lai Z."/>
            <person name="Lasko P."/>
            <person name="Lei Y."/>
            <person name="Levitsky A.A."/>
            <person name="Li J.H."/>
            <person name="Li Z."/>
            <person name="Liang Y."/>
            <person name="Lin X."/>
            <person name="Liu X."/>
            <person name="Mattei B."/>
            <person name="McIntosh T.C."/>
            <person name="McLeod M.P."/>
            <person name="McPherson D."/>
            <person name="Merkulov G."/>
            <person name="Milshina N.V."/>
            <person name="Mobarry C."/>
            <person name="Morris J."/>
            <person name="Moshrefi A."/>
            <person name="Mount S.M."/>
            <person name="Moy M."/>
            <person name="Murphy B."/>
            <person name="Murphy L."/>
            <person name="Muzny D.M."/>
            <person name="Nelson D.L."/>
            <person name="Nelson D.R."/>
            <person name="Nelson K.A."/>
            <person name="Nixon K."/>
            <person name="Nusskern D.R."/>
            <person name="Pacleb J.M."/>
            <person name="Palazzolo M."/>
            <person name="Pittman G.S."/>
            <person name="Pan S."/>
            <person name="Pollard J."/>
            <person name="Puri V."/>
            <person name="Reese M.G."/>
            <person name="Reinert K."/>
            <person name="Remington K."/>
            <person name="Saunders R.D.C."/>
            <person name="Scheeler F."/>
            <person name="Shen H."/>
            <person name="Shue B.C."/>
            <person name="Siden-Kiamos I."/>
            <person name="Simpson M."/>
            <person name="Skupski M.P."/>
            <person name="Smith T.J."/>
            <person name="Spier E."/>
            <person name="Spradling A.C."/>
            <person name="Stapleton M."/>
            <person name="Strong R."/>
            <person name="Sun E."/>
            <person name="Svirskas R."/>
            <person name="Tector C."/>
            <person name="Turner R."/>
            <person name="Venter E."/>
            <person name="Wang A.H."/>
            <person name="Wang X."/>
            <person name="Wang Z.-Y."/>
            <person name="Wassarman D.A."/>
            <person name="Weinstock G.M."/>
            <person name="Weissenbach J."/>
            <person name="Williams S.M."/>
            <person name="Woodage T."/>
            <person name="Worley K.C."/>
            <person name="Wu D."/>
            <person name="Yang S."/>
            <person name="Yao Q.A."/>
            <person name="Ye J."/>
            <person name="Yeh R.-F."/>
            <person name="Zaveri J.S."/>
            <person name="Zhan M."/>
            <person name="Zhang G."/>
            <person name="Zhao Q."/>
            <person name="Zheng L."/>
            <person name="Zheng X.H."/>
            <person name="Zhong F.N."/>
            <person name="Zhong W."/>
            <person name="Zhou X."/>
            <person name="Zhu S.C."/>
            <person name="Zhu X."/>
            <person name="Smith H.O."/>
            <person name="Gibbs R.A."/>
            <person name="Myers E.W."/>
            <person name="Rubin G.M."/>
            <person name="Venter J.C."/>
        </authorList>
    </citation>
    <scope>NUCLEOTIDE SEQUENCE [LARGE SCALE GENOMIC DNA]</scope>
    <source>
        <strain>Berkeley</strain>
    </source>
</reference>
<reference key="4">
    <citation type="journal article" date="2002" name="Genome Biol.">
        <title>Annotation of the Drosophila melanogaster euchromatic genome: a systematic review.</title>
        <authorList>
            <person name="Misra S."/>
            <person name="Crosby M.A."/>
            <person name="Mungall C.J."/>
            <person name="Matthews B.B."/>
            <person name="Campbell K.S."/>
            <person name="Hradecky P."/>
            <person name="Huang Y."/>
            <person name="Kaminker J.S."/>
            <person name="Millburn G.H."/>
            <person name="Prochnik S.E."/>
            <person name="Smith C.D."/>
            <person name="Tupy J.L."/>
            <person name="Whitfield E.J."/>
            <person name="Bayraktaroglu L."/>
            <person name="Berman B.P."/>
            <person name="Bettencourt B.R."/>
            <person name="Celniker S.E."/>
            <person name="de Grey A.D.N.J."/>
            <person name="Drysdale R.A."/>
            <person name="Harris N.L."/>
            <person name="Richter J."/>
            <person name="Russo S."/>
            <person name="Schroeder A.J."/>
            <person name="Shu S.Q."/>
            <person name="Stapleton M."/>
            <person name="Yamada C."/>
            <person name="Ashburner M."/>
            <person name="Gelbart W.M."/>
            <person name="Rubin G.M."/>
            <person name="Lewis S.E."/>
        </authorList>
    </citation>
    <scope>GENOME REANNOTATION</scope>
    <scope>ALTERNATIVE SPLICING</scope>
    <source>
        <strain>Berkeley</strain>
    </source>
</reference>
<reference key="5">
    <citation type="journal article" date="2002" name="Genome Biol.">
        <title>A Drosophila full-length cDNA resource.</title>
        <authorList>
            <person name="Stapleton M."/>
            <person name="Carlson J.W."/>
            <person name="Brokstein P."/>
            <person name="Yu C."/>
            <person name="Champe M."/>
            <person name="George R.A."/>
            <person name="Guarin H."/>
            <person name="Kronmiller B."/>
            <person name="Pacleb J.M."/>
            <person name="Park S."/>
            <person name="Wan K.H."/>
            <person name="Rubin G.M."/>
            <person name="Celniker S.E."/>
        </authorList>
    </citation>
    <scope>NUCLEOTIDE SEQUENCE [LARGE SCALE MRNA] OF 154-249 (ISOFORM CSP3)</scope>
    <source>
        <strain>Berkeley</strain>
        <tissue>Embryo</tissue>
    </source>
</reference>
<reference key="6">
    <citation type="journal article" date="1994" name="Science">
        <title>Paralysis and early death in cysteine string protein mutants of Drosophila.</title>
        <authorList>
            <person name="Zinsmaier K.E."/>
            <person name="Eberle K.K."/>
            <person name="Buchner E."/>
            <person name="Walter N."/>
            <person name="Benzer S."/>
        </authorList>
    </citation>
    <scope>FUNCTION</scope>
    <scope>TISSUE SPECIFICITY</scope>
    <source>
        <strain>Berlin</strain>
    </source>
</reference>
<reference key="7">
    <citation type="journal article" date="1996" name="FEBS Lett.">
        <title>Association of Drosophila cysteine string proteins with membranes.</title>
        <authorList>
            <person name="van de Goor J."/>
            <person name="Kelly R.B."/>
        </authorList>
    </citation>
    <scope>PALMITOYLATION</scope>
</reference>
<reference key="8">
    <citation type="journal article" date="2008" name="J. Proteome Res.">
        <title>Phosphoproteome analysis of Drosophila melanogaster embryos.</title>
        <authorList>
            <person name="Zhai B."/>
            <person name="Villen J."/>
            <person name="Beausoleil S.A."/>
            <person name="Mintseris J."/>
            <person name="Gygi S.P."/>
        </authorList>
    </citation>
    <scope>PHOSPHORYLATION [LARGE SCALE ANALYSIS] AT SER-12; THR-13; SER-14; SER-17 AND TYR-19</scope>
    <scope>IDENTIFICATION BY MASS SPECTROMETRY</scope>
    <source>
        <tissue>Embryo</tissue>
    </source>
</reference>